<evidence type="ECO:0000255" key="1">
    <source>
        <dbReference type="HAMAP-Rule" id="MF_03150"/>
    </source>
</evidence>
<evidence type="ECO:0000256" key="2">
    <source>
        <dbReference type="SAM" id="MobiDB-lite"/>
    </source>
</evidence>
<proteinExistence type="inferred from homology"/>
<dbReference type="EC" id="6.3.5.7" evidence="1"/>
<dbReference type="RefSeq" id="XP_001512042.2">
    <property type="nucleotide sequence ID" value="XM_001511992.5"/>
</dbReference>
<dbReference type="SMR" id="F7A3P2"/>
<dbReference type="FunCoup" id="F7A3P2">
    <property type="interactions" value="881"/>
</dbReference>
<dbReference type="STRING" id="9258.ENSOANP00000006170"/>
<dbReference type="Ensembl" id="ENSOANT00000006172.2">
    <property type="protein sequence ID" value="ENSOANP00000006170.1"/>
    <property type="gene ID" value="ENSOANG00000003897.3"/>
</dbReference>
<dbReference type="GeneID" id="100081215"/>
<dbReference type="KEGG" id="oaa:100081215"/>
<dbReference type="CTD" id="55278"/>
<dbReference type="eggNOG" id="KOG1211">
    <property type="taxonomic scope" value="Eukaryota"/>
</dbReference>
<dbReference type="GeneTree" id="ENSGT00550000074866"/>
<dbReference type="InParanoid" id="F7A3P2"/>
<dbReference type="OMA" id="QPASYCG"/>
<dbReference type="OrthoDB" id="421993at2759"/>
<dbReference type="TreeFam" id="TF313766"/>
<dbReference type="Proteomes" id="UP000002279">
    <property type="component" value="Unplaced"/>
</dbReference>
<dbReference type="Bgee" id="ENSOANG00000003897">
    <property type="expression patterns" value="Expressed in heart and 7 other cell types or tissues"/>
</dbReference>
<dbReference type="GO" id="GO:0030956">
    <property type="term" value="C:glutamyl-tRNA(Gln) amidotransferase complex"/>
    <property type="evidence" value="ECO:0000318"/>
    <property type="project" value="GO_Central"/>
</dbReference>
<dbReference type="GO" id="GO:0005739">
    <property type="term" value="C:mitochondrion"/>
    <property type="evidence" value="ECO:0000318"/>
    <property type="project" value="GO_Central"/>
</dbReference>
<dbReference type="GO" id="GO:0005524">
    <property type="term" value="F:ATP binding"/>
    <property type="evidence" value="ECO:0007669"/>
    <property type="project" value="UniProtKB-KW"/>
</dbReference>
<dbReference type="GO" id="GO:0050567">
    <property type="term" value="F:glutaminyl-tRNA synthase (glutamine-hydrolyzing) activity"/>
    <property type="evidence" value="ECO:0000318"/>
    <property type="project" value="GO_Central"/>
</dbReference>
<dbReference type="GO" id="GO:0070681">
    <property type="term" value="P:glutaminyl-tRNAGln biosynthesis via transamidation"/>
    <property type="evidence" value="ECO:0000318"/>
    <property type="project" value="GO_Central"/>
</dbReference>
<dbReference type="GO" id="GO:0032543">
    <property type="term" value="P:mitochondrial translation"/>
    <property type="evidence" value="ECO:0000318"/>
    <property type="project" value="GO_Central"/>
</dbReference>
<dbReference type="GO" id="GO:0031647">
    <property type="term" value="P:regulation of protein stability"/>
    <property type="evidence" value="ECO:0007669"/>
    <property type="project" value="Ensembl"/>
</dbReference>
<dbReference type="FunFam" id="3.90.1300.10:FF:000002">
    <property type="entry name" value="Glutamyl-tRNA(Gln) amidotransferase subunit A, mitochondrial"/>
    <property type="match status" value="1"/>
</dbReference>
<dbReference type="Gene3D" id="3.90.1300.10">
    <property type="entry name" value="Amidase signature (AS) domain"/>
    <property type="match status" value="1"/>
</dbReference>
<dbReference type="HAMAP" id="MF_00120">
    <property type="entry name" value="GatA"/>
    <property type="match status" value="1"/>
</dbReference>
<dbReference type="InterPro" id="IPR000120">
    <property type="entry name" value="Amidase"/>
</dbReference>
<dbReference type="InterPro" id="IPR023631">
    <property type="entry name" value="Amidase_dom"/>
</dbReference>
<dbReference type="InterPro" id="IPR036928">
    <property type="entry name" value="AS_sf"/>
</dbReference>
<dbReference type="InterPro" id="IPR004412">
    <property type="entry name" value="GatA"/>
</dbReference>
<dbReference type="NCBIfam" id="TIGR00132">
    <property type="entry name" value="gatA"/>
    <property type="match status" value="1"/>
</dbReference>
<dbReference type="PANTHER" id="PTHR11895:SF7">
    <property type="entry name" value="GLUTAMYL-TRNA(GLN) AMIDOTRANSFERASE SUBUNIT A, MITOCHONDRIAL"/>
    <property type="match status" value="1"/>
</dbReference>
<dbReference type="PANTHER" id="PTHR11895">
    <property type="entry name" value="TRANSAMIDASE"/>
    <property type="match status" value="1"/>
</dbReference>
<dbReference type="Pfam" id="PF01425">
    <property type="entry name" value="Amidase"/>
    <property type="match status" value="2"/>
</dbReference>
<dbReference type="SUPFAM" id="SSF75304">
    <property type="entry name" value="Amidase signature (AS) enzymes"/>
    <property type="match status" value="1"/>
</dbReference>
<name>GATA_ORNAN</name>
<organism>
    <name type="scientific">Ornithorhynchus anatinus</name>
    <name type="common">Duckbill platypus</name>
    <dbReference type="NCBI Taxonomy" id="9258"/>
    <lineage>
        <taxon>Eukaryota</taxon>
        <taxon>Metazoa</taxon>
        <taxon>Chordata</taxon>
        <taxon>Craniata</taxon>
        <taxon>Vertebrata</taxon>
        <taxon>Euteleostomi</taxon>
        <taxon>Mammalia</taxon>
        <taxon>Monotremata</taxon>
        <taxon>Ornithorhynchidae</taxon>
        <taxon>Ornithorhynchus</taxon>
    </lineage>
</organism>
<sequence>MLGLTLREISAALKQGQVSPIELCQRCLSRIKETKFLNAYITVTEERALKQAAESEKRYEKGQELGVLDGIPFSVKDNFSTAGIETTCASNMLKGYVPPYNATVVQKLLDQGAVLMGKTNLDEFAMGSGSTDGVFGPVRNPWSYSKQYRGKGSPDSSQEDQEPQWLVAGGSSGGSAAAVAAFTCFVALGSDTGGSTRNPAAHCGVVGLKPTYGLVSRHGLIPLVNSMDVPGILTRCVEDAAIILEVLAGHDPKDSTTVQDLVSPLALPSSVDISKLCIGIPKEYRAEGLSCETQAFWTRAADLFQSAGARVIEVSLPHTSYSIDCYHVLCTAEVASNMARFDGLEYGHRCNRDVSTEAMYAATRREGFNDVVRGRILSGNFFLLKENYNDYFIKAQKVRRLIANDFIHVFSSGVDVLLTPTTLSDAVPYLEFIKEDNSTRSAQDDVFTQAVNMAGLPAVTVPAARSKRGLPVGLQFIGRAFCEQQLLTVAKWFEQEVRFPALCLEDLTEAGLVAARHEKSVSVS</sequence>
<feature type="chain" id="PRO_0000413332" description="Glutamyl-tRNA(Gln) amidotransferase subunit A, mitochondrial">
    <location>
        <begin position="1"/>
        <end position="524"/>
    </location>
</feature>
<feature type="region of interest" description="Disordered" evidence="2">
    <location>
        <begin position="146"/>
        <end position="168"/>
    </location>
</feature>
<feature type="active site" description="Charge relay system" evidence="1">
    <location>
        <position position="76"/>
    </location>
</feature>
<feature type="active site" description="Charge relay system" evidence="1">
    <location>
        <position position="171"/>
    </location>
</feature>
<feature type="active site" description="Acyl-ester intermediate" evidence="1">
    <location>
        <position position="195"/>
    </location>
</feature>
<comment type="function">
    <text evidence="1">Allows the formation of correctly charged Gln-tRNA(Gln) through the transamidation of misacylated Glu-tRNA(Gln) in the mitochondria. The reaction takes place in the presence of glutamine and ATP through an activated gamma-phospho-Glu-tRNA(Gln).</text>
</comment>
<comment type="catalytic activity">
    <reaction evidence="1">
        <text>L-glutamyl-tRNA(Gln) + L-glutamine + ATP + H2O = L-glutaminyl-tRNA(Gln) + L-glutamate + ADP + phosphate + H(+)</text>
        <dbReference type="Rhea" id="RHEA:17521"/>
        <dbReference type="Rhea" id="RHEA-COMP:9681"/>
        <dbReference type="Rhea" id="RHEA-COMP:9684"/>
        <dbReference type="ChEBI" id="CHEBI:15377"/>
        <dbReference type="ChEBI" id="CHEBI:15378"/>
        <dbReference type="ChEBI" id="CHEBI:29985"/>
        <dbReference type="ChEBI" id="CHEBI:30616"/>
        <dbReference type="ChEBI" id="CHEBI:43474"/>
        <dbReference type="ChEBI" id="CHEBI:58359"/>
        <dbReference type="ChEBI" id="CHEBI:78520"/>
        <dbReference type="ChEBI" id="CHEBI:78521"/>
        <dbReference type="ChEBI" id="CHEBI:456216"/>
        <dbReference type="EC" id="6.3.5.7"/>
    </reaction>
</comment>
<comment type="subunit">
    <text evidence="1">Subunit of the heterotrimeric GatCAB amidotransferase (AdT) complex, composed of A (QRSL1), B (GATB) and C (GATC) subunits.</text>
</comment>
<comment type="subcellular location">
    <subcellularLocation>
        <location evidence="1">Mitochondrion</location>
    </subcellularLocation>
</comment>
<comment type="similarity">
    <text evidence="1">Belongs to the amidase family. GatA subfamily.</text>
</comment>
<gene>
    <name evidence="1" type="primary">QRSL1</name>
</gene>
<protein>
    <recommendedName>
        <fullName evidence="1">Glutamyl-tRNA(Gln) amidotransferase subunit A, mitochondrial</fullName>
        <shortName evidence="1">Glu-AdT subunit A</shortName>
        <ecNumber evidence="1">6.3.5.7</ecNumber>
    </recommendedName>
    <alternativeName>
        <fullName evidence="1">Glutaminyl-tRNA synthase-like protein 1</fullName>
    </alternativeName>
</protein>
<accession>F7A3P2</accession>
<reference key="1">
    <citation type="journal article" date="2008" name="Nature">
        <title>Genome analysis of the platypus reveals unique signatures of evolution.</title>
        <authorList>
            <person name="Warren W.C."/>
            <person name="Hillier L.W."/>
            <person name="Marshall Graves J.A."/>
            <person name="Birney E."/>
            <person name="Ponting C.P."/>
            <person name="Grutzner F."/>
            <person name="Belov K."/>
            <person name="Miller W."/>
            <person name="Clarke L."/>
            <person name="Chinwalla A.T."/>
            <person name="Yang S.P."/>
            <person name="Heger A."/>
            <person name="Locke D.P."/>
            <person name="Miethke P."/>
            <person name="Waters P.D."/>
            <person name="Veyrunes F."/>
            <person name="Fulton L."/>
            <person name="Fulton B."/>
            <person name="Graves T."/>
            <person name="Wallis J."/>
            <person name="Puente X.S."/>
            <person name="Lopez-Otin C."/>
            <person name="Ordonez G.R."/>
            <person name="Eichler E.E."/>
            <person name="Chen L."/>
            <person name="Cheng Z."/>
            <person name="Deakin J.E."/>
            <person name="Alsop A."/>
            <person name="Thompson K."/>
            <person name="Kirby P."/>
            <person name="Papenfuss A.T."/>
            <person name="Wakefield M.J."/>
            <person name="Olender T."/>
            <person name="Lancet D."/>
            <person name="Huttley G.A."/>
            <person name="Smit A.F."/>
            <person name="Pask A."/>
            <person name="Temple-Smith P."/>
            <person name="Batzer M.A."/>
            <person name="Walker J.A."/>
            <person name="Konkel M.K."/>
            <person name="Harris R.S."/>
            <person name="Whittington C.M."/>
            <person name="Wong E.S."/>
            <person name="Gemmell N.J."/>
            <person name="Buschiazzo E."/>
            <person name="Vargas Jentzsch I.M."/>
            <person name="Merkel A."/>
            <person name="Schmitz J."/>
            <person name="Zemann A."/>
            <person name="Churakov G."/>
            <person name="Kriegs J.O."/>
            <person name="Brosius J."/>
            <person name="Murchison E.P."/>
            <person name="Sachidanandam R."/>
            <person name="Smith C."/>
            <person name="Hannon G.J."/>
            <person name="Tsend-Ayush E."/>
            <person name="McMillan D."/>
            <person name="Attenborough R."/>
            <person name="Rens W."/>
            <person name="Ferguson-Smith M."/>
            <person name="Lefevre C.M."/>
            <person name="Sharp J.A."/>
            <person name="Nicholas K.R."/>
            <person name="Ray D.A."/>
            <person name="Kube M."/>
            <person name="Reinhardt R."/>
            <person name="Pringle T.H."/>
            <person name="Taylor J."/>
            <person name="Jones R.C."/>
            <person name="Nixon B."/>
            <person name="Dacheux J.L."/>
            <person name="Niwa H."/>
            <person name="Sekita Y."/>
            <person name="Huang X."/>
            <person name="Stark A."/>
            <person name="Kheradpour P."/>
            <person name="Kellis M."/>
            <person name="Flicek P."/>
            <person name="Chen Y."/>
            <person name="Webber C."/>
            <person name="Hardison R."/>
            <person name="Nelson J."/>
            <person name="Hallsworth-Pepin K."/>
            <person name="Delehaunty K."/>
            <person name="Markovic C."/>
            <person name="Minx P."/>
            <person name="Feng Y."/>
            <person name="Kremitzki C."/>
            <person name="Mitreva M."/>
            <person name="Glasscock J."/>
            <person name="Wylie T."/>
            <person name="Wohldmann P."/>
            <person name="Thiru P."/>
            <person name="Nhan M.N."/>
            <person name="Pohl C.S."/>
            <person name="Smith S.M."/>
            <person name="Hou S."/>
            <person name="Nefedov M."/>
            <person name="de Jong P.J."/>
            <person name="Renfree M.B."/>
            <person name="Mardis E.R."/>
            <person name="Wilson R.K."/>
        </authorList>
    </citation>
    <scope>NUCLEOTIDE SEQUENCE [LARGE SCALE GENOMIC DNA]</scope>
    <source>
        <strain>Glennie</strain>
    </source>
</reference>
<keyword id="KW-0067">ATP-binding</keyword>
<keyword id="KW-0436">Ligase</keyword>
<keyword id="KW-0496">Mitochondrion</keyword>
<keyword id="KW-0547">Nucleotide-binding</keyword>
<keyword id="KW-0648">Protein biosynthesis</keyword>
<keyword id="KW-1185">Reference proteome</keyword>